<proteinExistence type="evidence at protein level"/>
<dbReference type="EC" id="2.4.1.11" evidence="7"/>
<dbReference type="EMBL" id="AK138992">
    <property type="protein sequence ID" value="BAE23850.1"/>
    <property type="molecule type" value="mRNA"/>
</dbReference>
<dbReference type="EMBL" id="BC021322">
    <property type="protein sequence ID" value="AAH21322.1"/>
    <property type="molecule type" value="mRNA"/>
</dbReference>
<dbReference type="EMBL" id="BC158081">
    <property type="protein sequence ID" value="AAI58082.1"/>
    <property type="molecule type" value="mRNA"/>
</dbReference>
<dbReference type="CCDS" id="CCDS20683.1"/>
<dbReference type="RefSeq" id="NP_663547.2">
    <property type="nucleotide sequence ID" value="NM_145572.3"/>
</dbReference>
<dbReference type="SMR" id="Q8VCB3"/>
<dbReference type="FunCoup" id="Q8VCB3">
    <property type="interactions" value="675"/>
</dbReference>
<dbReference type="IntAct" id="Q8VCB3">
    <property type="interactions" value="1"/>
</dbReference>
<dbReference type="STRING" id="10090.ENSMUSP00000032371"/>
<dbReference type="CAZy" id="GT3">
    <property type="family name" value="Glycosyltransferase Family 3"/>
</dbReference>
<dbReference type="GlyGen" id="Q8VCB3">
    <property type="glycosylation" value="1 site, 1 O-linked glycan (1 site)"/>
</dbReference>
<dbReference type="iPTMnet" id="Q8VCB3"/>
<dbReference type="PhosphoSitePlus" id="Q8VCB3"/>
<dbReference type="SwissPalm" id="Q8VCB3"/>
<dbReference type="jPOST" id="Q8VCB3"/>
<dbReference type="PaxDb" id="10090-ENSMUSP00000032371"/>
<dbReference type="PeptideAtlas" id="Q8VCB3"/>
<dbReference type="ProteomicsDB" id="271353"/>
<dbReference type="Antibodypedia" id="24071">
    <property type="antibodies" value="103 antibodies from 25 providers"/>
</dbReference>
<dbReference type="DNASU" id="232493"/>
<dbReference type="Ensembl" id="ENSMUST00000032371.8">
    <property type="protein sequence ID" value="ENSMUSP00000032371.8"/>
    <property type="gene ID" value="ENSMUSG00000030244.8"/>
</dbReference>
<dbReference type="GeneID" id="232493"/>
<dbReference type="KEGG" id="mmu:232493"/>
<dbReference type="UCSC" id="uc009epi.2">
    <property type="organism name" value="mouse"/>
</dbReference>
<dbReference type="AGR" id="MGI:2385254"/>
<dbReference type="CTD" id="2998"/>
<dbReference type="MGI" id="MGI:2385254">
    <property type="gene designation" value="Gys2"/>
</dbReference>
<dbReference type="VEuPathDB" id="HostDB:ENSMUSG00000030244"/>
<dbReference type="eggNOG" id="KOG3742">
    <property type="taxonomic scope" value="Eukaryota"/>
</dbReference>
<dbReference type="GeneTree" id="ENSGT00390000018612"/>
<dbReference type="HOGENOM" id="CLU_015910_1_0_1"/>
<dbReference type="InParanoid" id="Q8VCB3"/>
<dbReference type="OMA" id="RMHKSNV"/>
<dbReference type="OrthoDB" id="6335297at2759"/>
<dbReference type="PhylomeDB" id="Q8VCB3"/>
<dbReference type="TreeFam" id="TF300306"/>
<dbReference type="UniPathway" id="UPA00164"/>
<dbReference type="BioGRID-ORCS" id="232493">
    <property type="hits" value="5 hits in 79 CRISPR screens"/>
</dbReference>
<dbReference type="PRO" id="PR:Q8VCB3"/>
<dbReference type="Proteomes" id="UP000000589">
    <property type="component" value="Chromosome 6"/>
</dbReference>
<dbReference type="RNAct" id="Q8VCB3">
    <property type="molecule type" value="protein"/>
</dbReference>
<dbReference type="Bgee" id="ENSMUSG00000030244">
    <property type="expression patterns" value="Expressed in hepatobiliary system and 46 other cell types or tissues"/>
</dbReference>
<dbReference type="ExpressionAtlas" id="Q8VCB3">
    <property type="expression patterns" value="baseline and differential"/>
</dbReference>
<dbReference type="GO" id="GO:0005938">
    <property type="term" value="C:cell cortex"/>
    <property type="evidence" value="ECO:0000250"/>
    <property type="project" value="UniProtKB"/>
</dbReference>
<dbReference type="GO" id="GO:0030864">
    <property type="term" value="C:cortical actin cytoskeleton"/>
    <property type="evidence" value="ECO:0000250"/>
    <property type="project" value="UniProtKB"/>
</dbReference>
<dbReference type="GO" id="GO:0005737">
    <property type="term" value="C:cytoplasm"/>
    <property type="evidence" value="ECO:0000250"/>
    <property type="project" value="UniProtKB"/>
</dbReference>
<dbReference type="GO" id="GO:0005856">
    <property type="term" value="C:cytoskeleton"/>
    <property type="evidence" value="ECO:0000250"/>
    <property type="project" value="UniProtKB"/>
</dbReference>
<dbReference type="GO" id="GO:0005829">
    <property type="term" value="C:cytosol"/>
    <property type="evidence" value="ECO:0000314"/>
    <property type="project" value="MGI"/>
</dbReference>
<dbReference type="GO" id="GO:0004373">
    <property type="term" value="F:alpha-1,4-glucan glucosyltransferase (UDP-glucose donor) activity"/>
    <property type="evidence" value="ECO:0000314"/>
    <property type="project" value="MGI"/>
</dbReference>
<dbReference type="GO" id="GO:0005978">
    <property type="term" value="P:glycogen biosynthetic process"/>
    <property type="evidence" value="ECO:0000315"/>
    <property type="project" value="FlyBase"/>
</dbReference>
<dbReference type="GO" id="GO:0009749">
    <property type="term" value="P:response to glucose"/>
    <property type="evidence" value="ECO:0000250"/>
    <property type="project" value="UniProtKB"/>
</dbReference>
<dbReference type="CDD" id="cd03793">
    <property type="entry name" value="GT3_GSY2-like"/>
    <property type="match status" value="1"/>
</dbReference>
<dbReference type="FunFam" id="3.40.50.2000:FF:000014">
    <property type="entry name" value="Glycogen [starch] synthase"/>
    <property type="match status" value="1"/>
</dbReference>
<dbReference type="FunFam" id="3.40.50.2000:FF:000028">
    <property type="entry name" value="Glycogen [starch] synthase"/>
    <property type="match status" value="1"/>
</dbReference>
<dbReference type="Gene3D" id="3.40.50.2000">
    <property type="entry name" value="Glycogen Phosphorylase B"/>
    <property type="match status" value="2"/>
</dbReference>
<dbReference type="InterPro" id="IPR008631">
    <property type="entry name" value="Glycogen_synth"/>
</dbReference>
<dbReference type="PANTHER" id="PTHR10176:SF1">
    <property type="entry name" value="GLYCOGEN [STARCH] SYNTHASE, LIVER"/>
    <property type="match status" value="1"/>
</dbReference>
<dbReference type="PANTHER" id="PTHR10176">
    <property type="entry name" value="GLYCOGEN SYNTHASE"/>
    <property type="match status" value="1"/>
</dbReference>
<dbReference type="Pfam" id="PF05693">
    <property type="entry name" value="Glycogen_syn"/>
    <property type="match status" value="1"/>
</dbReference>
<dbReference type="SUPFAM" id="SSF53756">
    <property type="entry name" value="UDP-Glycosyltransferase/glycogen phosphorylase"/>
    <property type="match status" value="2"/>
</dbReference>
<keyword id="KW-0021">Allosteric enzyme</keyword>
<keyword id="KW-0320">Glycogen biosynthesis</keyword>
<keyword id="KW-0328">Glycosyltransferase</keyword>
<keyword id="KW-0597">Phosphoprotein</keyword>
<keyword id="KW-1185">Reference proteome</keyword>
<keyword id="KW-0808">Transferase</keyword>
<accession>Q8VCB3</accession>
<accession>Q3UTY0</accession>
<reference key="1">
    <citation type="journal article" date="2005" name="Science">
        <title>The transcriptional landscape of the mammalian genome.</title>
        <authorList>
            <person name="Carninci P."/>
            <person name="Kasukawa T."/>
            <person name="Katayama S."/>
            <person name="Gough J."/>
            <person name="Frith M.C."/>
            <person name="Maeda N."/>
            <person name="Oyama R."/>
            <person name="Ravasi T."/>
            <person name="Lenhard B."/>
            <person name="Wells C."/>
            <person name="Kodzius R."/>
            <person name="Shimokawa K."/>
            <person name="Bajic V.B."/>
            <person name="Brenner S.E."/>
            <person name="Batalov S."/>
            <person name="Forrest A.R."/>
            <person name="Zavolan M."/>
            <person name="Davis M.J."/>
            <person name="Wilming L.G."/>
            <person name="Aidinis V."/>
            <person name="Allen J.E."/>
            <person name="Ambesi-Impiombato A."/>
            <person name="Apweiler R."/>
            <person name="Aturaliya R.N."/>
            <person name="Bailey T.L."/>
            <person name="Bansal M."/>
            <person name="Baxter L."/>
            <person name="Beisel K.W."/>
            <person name="Bersano T."/>
            <person name="Bono H."/>
            <person name="Chalk A.M."/>
            <person name="Chiu K.P."/>
            <person name="Choudhary V."/>
            <person name="Christoffels A."/>
            <person name="Clutterbuck D.R."/>
            <person name="Crowe M.L."/>
            <person name="Dalla E."/>
            <person name="Dalrymple B.P."/>
            <person name="de Bono B."/>
            <person name="Della Gatta G."/>
            <person name="di Bernardo D."/>
            <person name="Down T."/>
            <person name="Engstrom P."/>
            <person name="Fagiolini M."/>
            <person name="Faulkner G."/>
            <person name="Fletcher C.F."/>
            <person name="Fukushima T."/>
            <person name="Furuno M."/>
            <person name="Futaki S."/>
            <person name="Gariboldi M."/>
            <person name="Georgii-Hemming P."/>
            <person name="Gingeras T.R."/>
            <person name="Gojobori T."/>
            <person name="Green R.E."/>
            <person name="Gustincich S."/>
            <person name="Harbers M."/>
            <person name="Hayashi Y."/>
            <person name="Hensch T.K."/>
            <person name="Hirokawa N."/>
            <person name="Hill D."/>
            <person name="Huminiecki L."/>
            <person name="Iacono M."/>
            <person name="Ikeo K."/>
            <person name="Iwama A."/>
            <person name="Ishikawa T."/>
            <person name="Jakt M."/>
            <person name="Kanapin A."/>
            <person name="Katoh M."/>
            <person name="Kawasawa Y."/>
            <person name="Kelso J."/>
            <person name="Kitamura H."/>
            <person name="Kitano H."/>
            <person name="Kollias G."/>
            <person name="Krishnan S.P."/>
            <person name="Kruger A."/>
            <person name="Kummerfeld S.K."/>
            <person name="Kurochkin I.V."/>
            <person name="Lareau L.F."/>
            <person name="Lazarevic D."/>
            <person name="Lipovich L."/>
            <person name="Liu J."/>
            <person name="Liuni S."/>
            <person name="McWilliam S."/>
            <person name="Madan Babu M."/>
            <person name="Madera M."/>
            <person name="Marchionni L."/>
            <person name="Matsuda H."/>
            <person name="Matsuzawa S."/>
            <person name="Miki H."/>
            <person name="Mignone F."/>
            <person name="Miyake S."/>
            <person name="Morris K."/>
            <person name="Mottagui-Tabar S."/>
            <person name="Mulder N."/>
            <person name="Nakano N."/>
            <person name="Nakauchi H."/>
            <person name="Ng P."/>
            <person name="Nilsson R."/>
            <person name="Nishiguchi S."/>
            <person name="Nishikawa S."/>
            <person name="Nori F."/>
            <person name="Ohara O."/>
            <person name="Okazaki Y."/>
            <person name="Orlando V."/>
            <person name="Pang K.C."/>
            <person name="Pavan W.J."/>
            <person name="Pavesi G."/>
            <person name="Pesole G."/>
            <person name="Petrovsky N."/>
            <person name="Piazza S."/>
            <person name="Reed J."/>
            <person name="Reid J.F."/>
            <person name="Ring B.Z."/>
            <person name="Ringwald M."/>
            <person name="Rost B."/>
            <person name="Ruan Y."/>
            <person name="Salzberg S.L."/>
            <person name="Sandelin A."/>
            <person name="Schneider C."/>
            <person name="Schoenbach C."/>
            <person name="Sekiguchi K."/>
            <person name="Semple C.A."/>
            <person name="Seno S."/>
            <person name="Sessa L."/>
            <person name="Sheng Y."/>
            <person name="Shibata Y."/>
            <person name="Shimada H."/>
            <person name="Shimada K."/>
            <person name="Silva D."/>
            <person name="Sinclair B."/>
            <person name="Sperling S."/>
            <person name="Stupka E."/>
            <person name="Sugiura K."/>
            <person name="Sultana R."/>
            <person name="Takenaka Y."/>
            <person name="Taki K."/>
            <person name="Tammoja K."/>
            <person name="Tan S.L."/>
            <person name="Tang S."/>
            <person name="Taylor M.S."/>
            <person name="Tegner J."/>
            <person name="Teichmann S.A."/>
            <person name="Ueda H.R."/>
            <person name="van Nimwegen E."/>
            <person name="Verardo R."/>
            <person name="Wei C.L."/>
            <person name="Yagi K."/>
            <person name="Yamanishi H."/>
            <person name="Zabarovsky E."/>
            <person name="Zhu S."/>
            <person name="Zimmer A."/>
            <person name="Hide W."/>
            <person name="Bult C."/>
            <person name="Grimmond S.M."/>
            <person name="Teasdale R.D."/>
            <person name="Liu E.T."/>
            <person name="Brusic V."/>
            <person name="Quackenbush J."/>
            <person name="Wahlestedt C."/>
            <person name="Mattick J.S."/>
            <person name="Hume D.A."/>
            <person name="Kai C."/>
            <person name="Sasaki D."/>
            <person name="Tomaru Y."/>
            <person name="Fukuda S."/>
            <person name="Kanamori-Katayama M."/>
            <person name="Suzuki M."/>
            <person name="Aoki J."/>
            <person name="Arakawa T."/>
            <person name="Iida J."/>
            <person name="Imamura K."/>
            <person name="Itoh M."/>
            <person name="Kato T."/>
            <person name="Kawaji H."/>
            <person name="Kawagashira N."/>
            <person name="Kawashima T."/>
            <person name="Kojima M."/>
            <person name="Kondo S."/>
            <person name="Konno H."/>
            <person name="Nakano K."/>
            <person name="Ninomiya N."/>
            <person name="Nishio T."/>
            <person name="Okada M."/>
            <person name="Plessy C."/>
            <person name="Shibata K."/>
            <person name="Shiraki T."/>
            <person name="Suzuki S."/>
            <person name="Tagami M."/>
            <person name="Waki K."/>
            <person name="Watahiki A."/>
            <person name="Okamura-Oho Y."/>
            <person name="Suzuki H."/>
            <person name="Kawai J."/>
            <person name="Hayashizaki Y."/>
        </authorList>
    </citation>
    <scope>NUCLEOTIDE SEQUENCE [LARGE SCALE MRNA]</scope>
    <source>
        <strain>C57BL/6J</strain>
        <tissue>Aorta</tissue>
        <tissue>Vein</tissue>
    </source>
</reference>
<reference key="2">
    <citation type="journal article" date="2004" name="Genome Res.">
        <title>The status, quality, and expansion of the NIH full-length cDNA project: the Mammalian Gene Collection (MGC).</title>
        <authorList>
            <consortium name="The MGC Project Team"/>
        </authorList>
    </citation>
    <scope>NUCLEOTIDE SEQUENCE [LARGE SCALE MRNA]</scope>
    <source>
        <strain>FVB/N</strain>
        <tissue>Liver</tissue>
    </source>
</reference>
<reference key="3">
    <citation type="journal article" date="2007" name="Proc. Natl. Acad. Sci. U.S.A.">
        <title>Large-scale phosphorylation analysis of mouse liver.</title>
        <authorList>
            <person name="Villen J."/>
            <person name="Beausoleil S.A."/>
            <person name="Gerber S.A."/>
            <person name="Gygi S.P."/>
        </authorList>
    </citation>
    <scope>PHOSPHORYLATION [LARGE SCALE ANALYSIS] AT SER-684</scope>
    <scope>IDENTIFICATION BY MASS SPECTROMETRY [LARGE SCALE ANALYSIS]</scope>
    <source>
        <tissue>Liver</tissue>
    </source>
</reference>
<reference key="4">
    <citation type="journal article" date="2008" name="J. Proteome Res.">
        <title>Specific phosphopeptide enrichment with immobilized titanium ion affinity chromatography adsorbent for phosphoproteome analysis.</title>
        <authorList>
            <person name="Zhou H."/>
            <person name="Ye M."/>
            <person name="Dong J."/>
            <person name="Han G."/>
            <person name="Jiang X."/>
            <person name="Wu R."/>
            <person name="Zou H."/>
        </authorList>
    </citation>
    <scope>IDENTIFICATION BY MASS SPECTROMETRY [LARGE SCALE ANALYSIS]</scope>
    <source>
        <tissue>Liver</tissue>
    </source>
</reference>
<reference key="5">
    <citation type="journal article" date="2010" name="Cell">
        <title>A tissue-specific atlas of mouse protein phosphorylation and expression.</title>
        <authorList>
            <person name="Huttlin E.L."/>
            <person name="Jedrychowski M.P."/>
            <person name="Elias J.E."/>
            <person name="Goswami T."/>
            <person name="Rad R."/>
            <person name="Beausoleil S.A."/>
            <person name="Villen J."/>
            <person name="Haas W."/>
            <person name="Sowa M.E."/>
            <person name="Gygi S.P."/>
        </authorList>
    </citation>
    <scope>PHOSPHORYLATION [LARGE SCALE ANALYSIS] AT SER-11</scope>
    <scope>IDENTIFICATION BY MASS SPECTROMETRY [LARGE SCALE ANALYSIS]</scope>
    <source>
        <tissue>Brown adipose tissue</tissue>
        <tissue>Kidney</tissue>
        <tissue>Liver</tissue>
    </source>
</reference>
<reference key="6">
    <citation type="journal article" date="2010" name="J. Biol. Chem.">
        <title>CLOCK regulates circadian rhythms of hepatic glycogen synthesis through transcriptional activation of Gys2.</title>
        <authorList>
            <person name="Doi R."/>
            <person name="Oishi K."/>
            <person name="Ishida N."/>
        </authorList>
    </citation>
    <scope>INDUCTION</scope>
</reference>
<reference key="7">
    <citation type="journal article" date="2014" name="Proc. Natl. Acad. Sci. U.S.A.">
        <title>Structural basis for the recruitment of glycogen synthase by glycogenin.</title>
        <authorList>
            <person name="Zeqiraj E."/>
            <person name="Tang X."/>
            <person name="Hunter R.W."/>
            <person name="Garcia-Rocha M."/>
            <person name="Judd A."/>
            <person name="Deak M."/>
            <person name="von Wilamowitz-Moellendorff A."/>
            <person name="Kurinov I."/>
            <person name="Guinovart J.J."/>
            <person name="Tyers M."/>
            <person name="Sakamoto K."/>
            <person name="Sicheri F."/>
        </authorList>
    </citation>
    <scope>FUNCTION</scope>
    <scope>CATALYTIC ACTIVITY</scope>
    <scope>BIOPHYSICOCHEMICAL PROPERTIES</scope>
    <scope>PATHWAY</scope>
    <scope>INTERACTION WITH GYG1</scope>
    <scope>MUTAGENESIS OF SER-8; TRP-135; GLY-141; TYR-239; CYS-243 AND GLU-510</scope>
</reference>
<evidence type="ECO:0000250" key="1">
    <source>
        <dbReference type="UniProtKB" id="P13807"/>
    </source>
</evidence>
<evidence type="ECO:0000250" key="2">
    <source>
        <dbReference type="UniProtKB" id="P13834"/>
    </source>
</evidence>
<evidence type="ECO:0000250" key="3">
    <source>
        <dbReference type="UniProtKB" id="P17625"/>
    </source>
</evidence>
<evidence type="ECO:0000250" key="4">
    <source>
        <dbReference type="UniProtKB" id="P54840"/>
    </source>
</evidence>
<evidence type="ECO:0000256" key="5">
    <source>
        <dbReference type="SAM" id="MobiDB-lite"/>
    </source>
</evidence>
<evidence type="ECO:0000269" key="6">
    <source>
    </source>
</evidence>
<evidence type="ECO:0000269" key="7">
    <source>
    </source>
</evidence>
<evidence type="ECO:0000305" key="8"/>
<evidence type="ECO:0000305" key="9">
    <source>
    </source>
</evidence>
<evidence type="ECO:0000312" key="10">
    <source>
        <dbReference type="MGI" id="MGI:2385254"/>
    </source>
</evidence>
<evidence type="ECO:0007744" key="11">
    <source>
    </source>
</evidence>
<evidence type="ECO:0007744" key="12">
    <source>
    </source>
</evidence>
<organism>
    <name type="scientific">Mus musculus</name>
    <name type="common">Mouse</name>
    <dbReference type="NCBI Taxonomy" id="10090"/>
    <lineage>
        <taxon>Eukaryota</taxon>
        <taxon>Metazoa</taxon>
        <taxon>Chordata</taxon>
        <taxon>Craniata</taxon>
        <taxon>Vertebrata</taxon>
        <taxon>Euteleostomi</taxon>
        <taxon>Mammalia</taxon>
        <taxon>Eutheria</taxon>
        <taxon>Euarchontoglires</taxon>
        <taxon>Glires</taxon>
        <taxon>Rodentia</taxon>
        <taxon>Myomorpha</taxon>
        <taxon>Muroidea</taxon>
        <taxon>Muridae</taxon>
        <taxon>Murinae</taxon>
        <taxon>Mus</taxon>
        <taxon>Mus</taxon>
    </lineage>
</organism>
<protein>
    <recommendedName>
        <fullName evidence="9">Glycogen [starch] synthase, liver</fullName>
        <ecNumber evidence="7">2.4.1.11</ecNumber>
    </recommendedName>
    <alternativeName>
        <fullName evidence="10">Glycogen synthase 2</fullName>
    </alternativeName>
</protein>
<name>GYS2_MOUSE</name>
<gene>
    <name evidence="10" type="primary">Gys2</name>
</gene>
<feature type="chain" id="PRO_0000274489" description="Glycogen [starch] synthase, liver">
    <location>
        <begin position="1"/>
        <end position="704"/>
    </location>
</feature>
<feature type="region of interest" description="Disordered" evidence="5">
    <location>
        <begin position="620"/>
        <end position="704"/>
    </location>
</feature>
<feature type="compositionally biased region" description="Low complexity" evidence="5">
    <location>
        <begin position="647"/>
        <end position="657"/>
    </location>
</feature>
<feature type="compositionally biased region" description="Acidic residues" evidence="5">
    <location>
        <begin position="658"/>
        <end position="675"/>
    </location>
</feature>
<feature type="binding site" evidence="1">
    <location>
        <position position="40"/>
    </location>
    <ligand>
        <name>UDP</name>
        <dbReference type="ChEBI" id="CHEBI:58223"/>
    </ligand>
</feature>
<feature type="binding site" evidence="1">
    <location>
        <position position="205"/>
    </location>
    <ligand>
        <name>UDP-alpha-D-glucose</name>
        <dbReference type="ChEBI" id="CHEBI:58885"/>
    </ligand>
</feature>
<feature type="binding site" evidence="1">
    <location>
        <position position="211"/>
    </location>
    <ligand>
        <name>UDP-alpha-D-glucose</name>
        <dbReference type="ChEBI" id="CHEBI:58885"/>
    </ligand>
</feature>
<feature type="binding site" description="in other chain" evidence="1">
    <location>
        <position position="291"/>
    </location>
    <ligand>
        <name>alpha-D-glucose 6-phosphate</name>
        <dbReference type="ChEBI" id="CHEBI:58225"/>
        <note>allosteric activator; ligand shared between two neighboring subunits</note>
    </ligand>
</feature>
<feature type="binding site" description="in other chain" evidence="1">
    <location>
        <position position="292"/>
    </location>
    <ligand>
        <name>alpha-D-glucose 6-phosphate</name>
        <dbReference type="ChEBI" id="CHEBI:58225"/>
        <note>allosteric activator; ligand shared between two neighboring subunits</note>
    </ligand>
</feature>
<feature type="binding site" evidence="1">
    <location>
        <position position="294"/>
    </location>
    <ligand>
        <name>alpha-D-glucose 6-phosphate</name>
        <dbReference type="ChEBI" id="CHEBI:58225"/>
        <note>allosteric activator; ligand shared between two neighboring subunits</note>
    </ligand>
</feature>
<feature type="binding site" evidence="1">
    <location>
        <position position="297"/>
    </location>
    <ligand>
        <name>alpha-D-glucose 6-phosphate</name>
        <dbReference type="ChEBI" id="CHEBI:58225"/>
        <note>allosteric activator; ligand shared between two neighboring subunits</note>
    </ligand>
</feature>
<feature type="binding site" evidence="1">
    <location>
        <position position="301"/>
    </location>
    <ligand>
        <name>alpha-D-glucose 6-phosphate</name>
        <dbReference type="ChEBI" id="CHEBI:58225"/>
        <note>allosteric activator; ligand shared between two neighboring subunits</note>
    </ligand>
</feature>
<feature type="binding site" evidence="1">
    <location>
        <position position="331"/>
    </location>
    <ligand>
        <name>UDP</name>
        <dbReference type="ChEBI" id="CHEBI:58223"/>
    </ligand>
</feature>
<feature type="binding site" evidence="1">
    <location>
        <position position="331"/>
    </location>
    <ligand>
        <name>UDP-alpha-D-glucose</name>
        <dbReference type="ChEBI" id="CHEBI:58885"/>
    </ligand>
</feature>
<feature type="binding site" evidence="1">
    <location>
        <position position="501"/>
    </location>
    <ligand>
        <name>alpha-D-glucose 6-phosphate</name>
        <dbReference type="ChEBI" id="CHEBI:58225"/>
        <note>allosteric activator; ligand shared between two neighboring subunits</note>
    </ligand>
</feature>
<feature type="binding site" evidence="1">
    <location>
        <position position="510"/>
    </location>
    <ligand>
        <name>UDP-alpha-D-glucose</name>
        <dbReference type="ChEBI" id="CHEBI:58885"/>
    </ligand>
</feature>
<feature type="binding site" evidence="1">
    <location>
        <position position="512"/>
    </location>
    <ligand>
        <name>UDP-alpha-D-glucose</name>
        <dbReference type="ChEBI" id="CHEBI:58885"/>
    </ligand>
</feature>
<feature type="binding site" evidence="1">
    <location>
        <position position="513"/>
    </location>
    <ligand>
        <name>UDP-alpha-D-glucose</name>
        <dbReference type="ChEBI" id="CHEBI:58885"/>
    </ligand>
</feature>
<feature type="binding site" evidence="1">
    <location>
        <position position="515"/>
    </location>
    <ligand>
        <name>UDP</name>
        <dbReference type="ChEBI" id="CHEBI:58223"/>
    </ligand>
</feature>
<feature type="binding site" evidence="1">
    <location>
        <position position="582"/>
    </location>
    <ligand>
        <name>alpha-D-glucose 6-phosphate</name>
        <dbReference type="ChEBI" id="CHEBI:58225"/>
        <note>allosteric activator; ligand shared between two neighboring subunits</note>
    </ligand>
</feature>
<feature type="binding site" evidence="1">
    <location>
        <position position="586"/>
    </location>
    <ligand>
        <name>alpha-D-glucose 6-phosphate</name>
        <dbReference type="ChEBI" id="CHEBI:58225"/>
        <note>allosteric activator; ligand shared between two neighboring subunits</note>
    </ligand>
</feature>
<feature type="modified residue" description="Phosphoserine; by AMPK and PKA" evidence="3">
    <location>
        <position position="8"/>
    </location>
</feature>
<feature type="modified residue" description="Phosphoserine" evidence="12">
    <location>
        <position position="11"/>
    </location>
</feature>
<feature type="modified residue" description="Phosphoserine" evidence="4">
    <location>
        <position position="627"/>
    </location>
</feature>
<feature type="modified residue" description="Phosphoserine; by GSK3-alpha and GSK3-beta" evidence="2">
    <location>
        <position position="641"/>
    </location>
</feature>
<feature type="modified residue" description="Phosphoserine; by GSK3-alpha and GSK3-beta" evidence="2">
    <location>
        <position position="645"/>
    </location>
</feature>
<feature type="modified residue" description="Phosphoserine; by GSK3-alpha and GSK3-beta" evidence="2">
    <location>
        <position position="649"/>
    </location>
</feature>
<feature type="modified residue" description="Phosphoserine; by GSK3-alpha and GSK3-beta" evidence="2">
    <location>
        <position position="653"/>
    </location>
</feature>
<feature type="modified residue" description="Phosphoserine; by CK2" evidence="2">
    <location>
        <position position="657"/>
    </location>
</feature>
<feature type="modified residue" description="Phosphoserine" evidence="11">
    <location>
        <position position="684"/>
    </location>
</feature>
<feature type="mutagenesis site" description="Abolishes phosphorylation. No effect on the interaction with GYG1. Does not affect the result of other mutations; when associated with A-135; R-135; R-141; A-239; A-243; or R-243." evidence="7">
    <original>S</original>
    <variation>A</variation>
    <location>
        <position position="8"/>
    </location>
</feature>
<feature type="mutagenesis site" description="No effect on the interaction with GYG1. No effect on the interaction with GYG1; when associated with A-8." evidence="7">
    <original>W</original>
    <variation>A</variation>
    <location>
        <position position="135"/>
    </location>
</feature>
<feature type="mutagenesis site" description="Loss of interaction with GYG1. Loss of interaction with GYG1; when associated with A-8." evidence="7">
    <original>W</original>
    <variation>R</variation>
    <location>
        <position position="135"/>
    </location>
</feature>
<feature type="mutagenesis site" description="Loss of interaction with GYG1. Loss of function. Loss of interaction with GYG1; when associated with A-8." evidence="7">
    <original>G</original>
    <variation>R</variation>
    <location>
        <position position="141"/>
    </location>
</feature>
<feature type="mutagenesis site" description="Loss of interaction with GYG1. Loss of function. Loss of interaction with GYG1; when associated with A-8." evidence="7">
    <original>Y</original>
    <variation>A</variation>
    <location>
        <position position="239"/>
    </location>
</feature>
<feature type="mutagenesis site" description="No effect on the interaction with GYG1. Loss of interaction with GYG1; when associated with A-8." evidence="7">
    <original>C</original>
    <variation>A</variation>
    <location>
        <position position="243"/>
    </location>
</feature>
<feature type="mutagenesis site" description="Loss of interaction with GYG1. Loss of function. Loss of interaction with GYG1; when associated with A-8." evidence="7">
    <original>C</original>
    <variation>R</variation>
    <location>
        <position position="243"/>
    </location>
</feature>
<feature type="mutagenesis site" description="Loss of catalytic activity." evidence="7">
    <original>E</original>
    <variation>A</variation>
    <location>
        <position position="510"/>
    </location>
</feature>
<feature type="sequence conflict" description="In Ref. 2; AAH21322." evidence="8" ref="2">
    <original>T</original>
    <variation>M</variation>
    <location>
        <position position="630"/>
    </location>
</feature>
<feature type="sequence conflict" description="In Ref. 2; AAH21322." evidence="8" ref="2">
    <original>C</original>
    <variation>S</variation>
    <location>
        <position position="656"/>
    </location>
</feature>
<sequence>MLRGRSLSVTSLGGLPVWEAERLPVEDLLLFEVSWEVTNKVGGICTVIQTKAKTTADEWGENYFLIGPYFEHNMKTQVEQCEPTNDAVRKAVDAMNKHGCQVHFGRWLIEGSPYVVLFDISSSAWNLDRWKGDFWEACGVGIPHHDREANDMLIFGSLTAWFLKEVTDHADGKHVIAQFHEWQAGTGLILSRARKLPIATVFTTHATLLGRYLCAANIDFYNQLDKFDIDKEAGERQIYHRYCMERASVHCAHVFTTVSEITAIEAEHMLKRKPDVVTPNGLNVKKFSAVHEFQNLHAMYKARIQDFVRGHFYGHLDFDLEKTLFLFIAGRYEFSNKGADIFLESLSRLNFLLRMHKSNVTVVVFFIMPAKTNNFNVETLKGQAVRKQLWDTVHCLKEKFGKKLYDGLLRGEIPDMNSILDRDDLTIMKRAIFSTQRQSLPPVTTHNMIDDSTDPILSTIRRIGLFNNRADRVKVILHPEFLSSTSPLLPMDYEEFVRGCHLGVFPSYYEPWGYTPAECTVMGIPSVTTNLSGFGCFVQEHVADPTAYGIYIVDRRFRSPDDSCNQLTQFLYGFCKQSRRQRIIQRNRTERLSDLLDWRYLGRYYQHARHLTLSRAFPDKFHLEPTSPPTTDGFKYPRPSSVPPSPSGSQASSPQCSDAEDEEDEDERYDEEEEAERDRLNIKSPFSLNHFPKGKKKLHGEYKN</sequence>
<comment type="function">
    <text evidence="7">Glycogen synthase participates in the glycogen biosynthetic process along with glycogenin and glycogen branching enzyme. Extends the primer composed of a few glucose units formed by glycogenin by adding new glucose units to it. In this context, glycogen synthase transfers the glycosyl residue from UDP-Glc to the non-reducing end of alpha-1,4-glucan.</text>
</comment>
<comment type="catalytic activity">
    <reaction evidence="7">
        <text>[(1-&gt;4)-alpha-D-glucosyl](n) + UDP-alpha-D-glucose = [(1-&gt;4)-alpha-D-glucosyl](n+1) + UDP + H(+)</text>
        <dbReference type="Rhea" id="RHEA:18549"/>
        <dbReference type="Rhea" id="RHEA-COMP:9584"/>
        <dbReference type="Rhea" id="RHEA-COMP:9587"/>
        <dbReference type="ChEBI" id="CHEBI:15378"/>
        <dbReference type="ChEBI" id="CHEBI:15444"/>
        <dbReference type="ChEBI" id="CHEBI:58223"/>
        <dbReference type="ChEBI" id="CHEBI:58885"/>
        <dbReference type="EC" id="2.4.1.11"/>
    </reaction>
    <physiologicalReaction direction="left-to-right" evidence="7">
        <dbReference type="Rhea" id="RHEA:18550"/>
    </physiologicalReaction>
</comment>
<comment type="activity regulation">
    <text evidence="2 4">Allosteric activation by glucose-6-phosphate. Phosphorylation reduces the activity towards UDP-glucose. When in the non-phosphorylated state, glycogen synthase does not require glucose-6-phosphate as an allosteric activator; when phosphorylated it does (By similarity).</text>
</comment>
<comment type="biophysicochemical properties">
    <kinetics>
        <KM evidence="7">0.48 mM for UDP-glucose (at 30 degrees Celsius)</KM>
    </kinetics>
</comment>
<comment type="pathway">
    <text evidence="7">Glycan biosynthesis; glycogen biosynthesis.</text>
</comment>
<comment type="subunit">
    <text evidence="1 9">Part of the glycogen synthase (GS)-glycogenin complex, a heterooctamer composed of a tetramer of GS and 2 dimers of glycogenin, where each GS protomer binds to one glycogenin subunit (via glycogenin C-terminus); the GS tetramer may dissociate from glycogenin dimers to continue glycogen polymerization on its own (By similarity). May also form a heterooctamer complex with GYG1 (via GYG1 C-terminus) (Probable).</text>
</comment>
<comment type="tissue specificity">
    <text evidence="8">Specifically expressed in liver.</text>
</comment>
<comment type="induction">
    <text evidence="6">Expression in the liver oscillates in a circadian manner with peak levels during the night.</text>
</comment>
<comment type="PTM">
    <text evidence="1 2 3 4 7">Phosphorylation reduces the activity towards UDP-alpha-D-glucose (By similarity). Primed phosphorylation at Ser-657 (site 5) by CSNK2A1 and CSNK2A2 is required for inhibitory phosphorylation at Ser-641 (site 3a), Ser-645 (site 3b), Ser-649 (site 3c) and Ser-653 (site 4) by GSK3A an GSK3B (By similarity). Dephosphorylation at Ser-641 and Ser-645 by PP1 activates the enzyme (By similarity). Phosphorylation at Ser-8 is not required for interaction with GYG1 (PubMed:24982189). Interaction with GYG1 does not regulate the phosphorylation at Ser-8 and Ser-641 (PubMed:24982189).</text>
</comment>
<comment type="similarity">
    <text evidence="8">Belongs to the glycosyltransferase 3 family.</text>
</comment>